<accession>Q9JUQ8</accession>
<accession>A1IRJ6</accession>
<name>PUR9_NEIMA</name>
<feature type="chain" id="PRO_0000192108" description="Bifunctional purine biosynthesis protein PurH">
    <location>
        <begin position="1"/>
        <end position="530"/>
    </location>
</feature>
<feature type="domain" description="MGS-like" evidence="2">
    <location>
        <begin position="1"/>
        <end position="147"/>
    </location>
</feature>
<organism>
    <name type="scientific">Neisseria meningitidis serogroup A / serotype 4A (strain DSM 15465 / Z2491)</name>
    <dbReference type="NCBI Taxonomy" id="122587"/>
    <lineage>
        <taxon>Bacteria</taxon>
        <taxon>Pseudomonadati</taxon>
        <taxon>Pseudomonadota</taxon>
        <taxon>Betaproteobacteria</taxon>
        <taxon>Neisseriales</taxon>
        <taxon>Neisseriaceae</taxon>
        <taxon>Neisseria</taxon>
    </lineage>
</organism>
<evidence type="ECO:0000255" key="1">
    <source>
        <dbReference type="HAMAP-Rule" id="MF_00139"/>
    </source>
</evidence>
<evidence type="ECO:0000255" key="2">
    <source>
        <dbReference type="PROSITE-ProRule" id="PRU01202"/>
    </source>
</evidence>
<comment type="catalytic activity">
    <reaction evidence="1">
        <text>(6R)-10-formyltetrahydrofolate + 5-amino-1-(5-phospho-beta-D-ribosyl)imidazole-4-carboxamide = 5-formamido-1-(5-phospho-D-ribosyl)imidazole-4-carboxamide + (6S)-5,6,7,8-tetrahydrofolate</text>
        <dbReference type="Rhea" id="RHEA:22192"/>
        <dbReference type="ChEBI" id="CHEBI:57453"/>
        <dbReference type="ChEBI" id="CHEBI:58467"/>
        <dbReference type="ChEBI" id="CHEBI:58475"/>
        <dbReference type="ChEBI" id="CHEBI:195366"/>
        <dbReference type="EC" id="2.1.2.3"/>
    </reaction>
</comment>
<comment type="catalytic activity">
    <reaction evidence="1">
        <text>IMP + H2O = 5-formamido-1-(5-phospho-D-ribosyl)imidazole-4-carboxamide</text>
        <dbReference type="Rhea" id="RHEA:18445"/>
        <dbReference type="ChEBI" id="CHEBI:15377"/>
        <dbReference type="ChEBI" id="CHEBI:58053"/>
        <dbReference type="ChEBI" id="CHEBI:58467"/>
        <dbReference type="EC" id="3.5.4.10"/>
    </reaction>
</comment>
<comment type="pathway">
    <text evidence="1">Purine metabolism; IMP biosynthesis via de novo pathway; 5-formamido-1-(5-phospho-D-ribosyl)imidazole-4-carboxamide from 5-amino-1-(5-phospho-D-ribosyl)imidazole-4-carboxamide (10-formyl THF route): step 1/1.</text>
</comment>
<comment type="pathway">
    <text evidence="1">Purine metabolism; IMP biosynthesis via de novo pathway; IMP from 5-formamido-1-(5-phospho-D-ribosyl)imidazole-4-carboxamide: step 1/1.</text>
</comment>
<comment type="domain">
    <text evidence="1">The IMP cyclohydrolase activity resides in the N-terminal region.</text>
</comment>
<comment type="similarity">
    <text evidence="1">Belongs to the PurH family.</text>
</comment>
<reference key="1">
    <citation type="journal article" date="2000" name="Nature">
        <title>Complete DNA sequence of a serogroup A strain of Neisseria meningitidis Z2491.</title>
        <authorList>
            <person name="Parkhill J."/>
            <person name="Achtman M."/>
            <person name="James K.D."/>
            <person name="Bentley S.D."/>
            <person name="Churcher C.M."/>
            <person name="Klee S.R."/>
            <person name="Morelli G."/>
            <person name="Basham D."/>
            <person name="Brown D."/>
            <person name="Chillingworth T."/>
            <person name="Davies R.M."/>
            <person name="Davis P."/>
            <person name="Devlin K."/>
            <person name="Feltwell T."/>
            <person name="Hamlin N."/>
            <person name="Holroyd S."/>
            <person name="Jagels K."/>
            <person name="Leather S."/>
            <person name="Moule S."/>
            <person name="Mungall K.L."/>
            <person name="Quail M.A."/>
            <person name="Rajandream M.A."/>
            <person name="Rutherford K.M."/>
            <person name="Simmonds M."/>
            <person name="Skelton J."/>
            <person name="Whitehead S."/>
            <person name="Spratt B.G."/>
            <person name="Barrell B.G."/>
        </authorList>
    </citation>
    <scope>NUCLEOTIDE SEQUENCE [LARGE SCALE GENOMIC DNA]</scope>
    <source>
        <strain>DSM 15465 / Z2491</strain>
    </source>
</reference>
<dbReference type="EC" id="2.1.2.3" evidence="1"/>
<dbReference type="EC" id="3.5.4.10" evidence="1"/>
<dbReference type="EMBL" id="AL157959">
    <property type="protein sequence ID" value="CAM08384.1"/>
    <property type="molecule type" value="Genomic_DNA"/>
</dbReference>
<dbReference type="PIR" id="H81885">
    <property type="entry name" value="H81885"/>
</dbReference>
<dbReference type="RefSeq" id="WP_002246828.1">
    <property type="nucleotide sequence ID" value="NC_003116.1"/>
</dbReference>
<dbReference type="SMR" id="Q9JUQ8"/>
<dbReference type="EnsemblBacteria" id="CAM08384">
    <property type="protein sequence ID" value="CAM08384"/>
    <property type="gene ID" value="NMA1182"/>
</dbReference>
<dbReference type="KEGG" id="nma:NMA1182"/>
<dbReference type="HOGENOM" id="CLU_016316_5_2_4"/>
<dbReference type="UniPathway" id="UPA00074">
    <property type="reaction ID" value="UER00133"/>
</dbReference>
<dbReference type="UniPathway" id="UPA00074">
    <property type="reaction ID" value="UER00135"/>
</dbReference>
<dbReference type="Proteomes" id="UP000000626">
    <property type="component" value="Chromosome"/>
</dbReference>
<dbReference type="GO" id="GO:0005829">
    <property type="term" value="C:cytosol"/>
    <property type="evidence" value="ECO:0007669"/>
    <property type="project" value="TreeGrafter"/>
</dbReference>
<dbReference type="GO" id="GO:0003937">
    <property type="term" value="F:IMP cyclohydrolase activity"/>
    <property type="evidence" value="ECO:0007669"/>
    <property type="project" value="UniProtKB-UniRule"/>
</dbReference>
<dbReference type="GO" id="GO:0004643">
    <property type="term" value="F:phosphoribosylaminoimidazolecarboxamide formyltransferase activity"/>
    <property type="evidence" value="ECO:0007669"/>
    <property type="project" value="UniProtKB-UniRule"/>
</dbReference>
<dbReference type="GO" id="GO:0006189">
    <property type="term" value="P:'de novo' IMP biosynthetic process"/>
    <property type="evidence" value="ECO:0007669"/>
    <property type="project" value="UniProtKB-UniRule"/>
</dbReference>
<dbReference type="CDD" id="cd01421">
    <property type="entry name" value="IMPCH"/>
    <property type="match status" value="1"/>
</dbReference>
<dbReference type="FunFam" id="3.40.140.20:FF:000001">
    <property type="entry name" value="Bifunctional purine biosynthesis protein PurH"/>
    <property type="match status" value="1"/>
</dbReference>
<dbReference type="FunFam" id="3.40.140.20:FF:000002">
    <property type="entry name" value="Bifunctional purine biosynthesis protein PurH"/>
    <property type="match status" value="1"/>
</dbReference>
<dbReference type="FunFam" id="3.40.50.1380:FF:000001">
    <property type="entry name" value="Bifunctional purine biosynthesis protein PurH"/>
    <property type="match status" value="1"/>
</dbReference>
<dbReference type="Gene3D" id="3.40.140.20">
    <property type="match status" value="2"/>
</dbReference>
<dbReference type="Gene3D" id="3.40.50.1380">
    <property type="entry name" value="Methylglyoxal synthase-like domain"/>
    <property type="match status" value="1"/>
</dbReference>
<dbReference type="HAMAP" id="MF_00139">
    <property type="entry name" value="PurH"/>
    <property type="match status" value="1"/>
</dbReference>
<dbReference type="InterPro" id="IPR024051">
    <property type="entry name" value="AICAR_Tfase_dup_dom_sf"/>
</dbReference>
<dbReference type="InterPro" id="IPR016193">
    <property type="entry name" value="Cytidine_deaminase-like"/>
</dbReference>
<dbReference type="InterPro" id="IPR011607">
    <property type="entry name" value="MGS-like_dom"/>
</dbReference>
<dbReference type="InterPro" id="IPR036914">
    <property type="entry name" value="MGS-like_dom_sf"/>
</dbReference>
<dbReference type="InterPro" id="IPR002695">
    <property type="entry name" value="PurH-like"/>
</dbReference>
<dbReference type="NCBIfam" id="NF002049">
    <property type="entry name" value="PRK00881.1"/>
    <property type="match status" value="1"/>
</dbReference>
<dbReference type="NCBIfam" id="TIGR00355">
    <property type="entry name" value="purH"/>
    <property type="match status" value="1"/>
</dbReference>
<dbReference type="PANTHER" id="PTHR11692:SF0">
    <property type="entry name" value="BIFUNCTIONAL PURINE BIOSYNTHESIS PROTEIN ATIC"/>
    <property type="match status" value="1"/>
</dbReference>
<dbReference type="PANTHER" id="PTHR11692">
    <property type="entry name" value="BIFUNCTIONAL PURINE BIOSYNTHESIS PROTEIN PURH"/>
    <property type="match status" value="1"/>
</dbReference>
<dbReference type="Pfam" id="PF01808">
    <property type="entry name" value="AICARFT_IMPCHas"/>
    <property type="match status" value="1"/>
</dbReference>
<dbReference type="Pfam" id="PF02142">
    <property type="entry name" value="MGS"/>
    <property type="match status" value="1"/>
</dbReference>
<dbReference type="PIRSF" id="PIRSF000414">
    <property type="entry name" value="AICARFT_IMPCHas"/>
    <property type="match status" value="1"/>
</dbReference>
<dbReference type="SMART" id="SM00798">
    <property type="entry name" value="AICARFT_IMPCHas"/>
    <property type="match status" value="1"/>
</dbReference>
<dbReference type="SMART" id="SM00851">
    <property type="entry name" value="MGS"/>
    <property type="match status" value="1"/>
</dbReference>
<dbReference type="SUPFAM" id="SSF53927">
    <property type="entry name" value="Cytidine deaminase-like"/>
    <property type="match status" value="1"/>
</dbReference>
<dbReference type="SUPFAM" id="SSF52335">
    <property type="entry name" value="Methylglyoxal synthase-like"/>
    <property type="match status" value="1"/>
</dbReference>
<dbReference type="PROSITE" id="PS51855">
    <property type="entry name" value="MGS"/>
    <property type="match status" value="1"/>
</dbReference>
<protein>
    <recommendedName>
        <fullName evidence="1">Bifunctional purine biosynthesis protein PurH</fullName>
    </recommendedName>
    <domain>
        <recommendedName>
            <fullName evidence="1">Phosphoribosylaminoimidazolecarboxamide formyltransferase</fullName>
            <ecNumber evidence="1">2.1.2.3</ecNumber>
        </recommendedName>
        <alternativeName>
            <fullName evidence="1">AICAR transformylase</fullName>
        </alternativeName>
    </domain>
    <domain>
        <recommendedName>
            <fullName evidence="1">IMP cyclohydrolase</fullName>
            <ecNumber evidence="1">3.5.4.10</ecNumber>
        </recommendedName>
        <alternativeName>
            <fullName evidence="1">ATIC</fullName>
        </alternativeName>
        <alternativeName>
            <fullName evidence="1">IMP synthase</fullName>
        </alternativeName>
        <alternativeName>
            <fullName evidence="1">Inosinicase</fullName>
        </alternativeName>
    </domain>
</protein>
<sequence length="530" mass="57435">MPSIKRALISLSDKTGAVEFAQTLHKLGVEILSTGGTAKLLADAGVPVIEVADYTGFPEMLDGRVKTLHPKIHGGILGRRDLPEHVAKMEEHGIGNIDLVCVNLYPFAATIAKPNCTLEDAIENIDIGGPTMVRSAAKNWKHVAIVTDPADFPAIAAEMEANNGALSDKTRFNLSRKAFSHTAQYDGMISNYLTSLSDDVLSGTPEIGEFPSQFNQSWIKVQDMRYGENPHQRAAFYRDVYPAAGSLSAYKQLQGKELSYNNIADADAAWEAVKSFDAPACVIVKHANPCGVAVAADTLTAYKLAYATDTTSAFGGIIAFNREVDGETVKQITDNQFMEVLMAPKFTAEALEIAAAKKNVRVLQISLTTPLEAGANRFELKRVGGGLLVQTPDIYRLNRADLKVVSKRQLTEQEWNDLMFVWNVAKYVKSNAIVFGKGGQTYGIGAGQMSRVDSTRIAARKAQDANLDLNGACAASDAFFPFRDGVDVIAEQGIKAIIHPAGSMRDQEVFDAADEHGIAMVVTGVRHFRH</sequence>
<gene>
    <name evidence="1" type="primary">purH</name>
    <name type="ordered locus">NMA1182</name>
</gene>
<keyword id="KW-0378">Hydrolase</keyword>
<keyword id="KW-0511">Multifunctional enzyme</keyword>
<keyword id="KW-0658">Purine biosynthesis</keyword>
<keyword id="KW-0808">Transferase</keyword>
<proteinExistence type="inferred from homology"/>